<proteinExistence type="inferred from homology"/>
<reference key="1">
    <citation type="submission" date="2009-03" db="EMBL/GenBank/DDBJ databases">
        <title>Complete genome sequence of Edwardsiella ictaluri 93-146.</title>
        <authorList>
            <person name="Williams M.L."/>
            <person name="Gillaspy A.F."/>
            <person name="Dyer D.W."/>
            <person name="Thune R.L."/>
            <person name="Waldbieser G.C."/>
            <person name="Schuster S.C."/>
            <person name="Gipson J."/>
            <person name="Zaitshik J."/>
            <person name="Landry C."/>
            <person name="Lawrence M.L."/>
        </authorList>
    </citation>
    <scope>NUCLEOTIDE SEQUENCE [LARGE SCALE GENOMIC DNA]</scope>
    <source>
        <strain>93-146</strain>
    </source>
</reference>
<feature type="chain" id="PRO_1000203471" description="3-methyl-2-oxobutanoate hydroxymethyltransferase">
    <location>
        <begin position="1"/>
        <end position="264"/>
    </location>
</feature>
<feature type="active site" description="Proton acceptor" evidence="1">
    <location>
        <position position="181"/>
    </location>
</feature>
<feature type="binding site" evidence="1">
    <location>
        <begin position="45"/>
        <end position="46"/>
    </location>
    <ligand>
        <name>3-methyl-2-oxobutanoate</name>
        <dbReference type="ChEBI" id="CHEBI:11851"/>
    </ligand>
</feature>
<feature type="binding site" evidence="1">
    <location>
        <position position="45"/>
    </location>
    <ligand>
        <name>Mg(2+)</name>
        <dbReference type="ChEBI" id="CHEBI:18420"/>
    </ligand>
</feature>
<feature type="binding site" evidence="1">
    <location>
        <position position="84"/>
    </location>
    <ligand>
        <name>3-methyl-2-oxobutanoate</name>
        <dbReference type="ChEBI" id="CHEBI:11851"/>
    </ligand>
</feature>
<feature type="binding site" evidence="1">
    <location>
        <position position="84"/>
    </location>
    <ligand>
        <name>Mg(2+)</name>
        <dbReference type="ChEBI" id="CHEBI:18420"/>
    </ligand>
</feature>
<feature type="binding site" evidence="1">
    <location>
        <position position="112"/>
    </location>
    <ligand>
        <name>3-methyl-2-oxobutanoate</name>
        <dbReference type="ChEBI" id="CHEBI:11851"/>
    </ligand>
</feature>
<feature type="binding site" evidence="1">
    <location>
        <position position="114"/>
    </location>
    <ligand>
        <name>Mg(2+)</name>
        <dbReference type="ChEBI" id="CHEBI:18420"/>
    </ligand>
</feature>
<name>PANB_EDWI9</name>
<organism>
    <name type="scientific">Edwardsiella ictaluri (strain 93-146)</name>
    <dbReference type="NCBI Taxonomy" id="634503"/>
    <lineage>
        <taxon>Bacteria</taxon>
        <taxon>Pseudomonadati</taxon>
        <taxon>Pseudomonadota</taxon>
        <taxon>Gammaproteobacteria</taxon>
        <taxon>Enterobacterales</taxon>
        <taxon>Hafniaceae</taxon>
        <taxon>Edwardsiella</taxon>
    </lineage>
</organism>
<gene>
    <name evidence="1" type="primary">panB</name>
    <name type="ordered locus">NT01EI_0786</name>
</gene>
<keyword id="KW-0963">Cytoplasm</keyword>
<keyword id="KW-0460">Magnesium</keyword>
<keyword id="KW-0479">Metal-binding</keyword>
<keyword id="KW-0566">Pantothenate biosynthesis</keyword>
<keyword id="KW-0808">Transferase</keyword>
<comment type="function">
    <text evidence="1">Catalyzes the reversible reaction in which hydroxymethyl group from 5,10-methylenetetrahydrofolate is transferred onto alpha-ketoisovalerate to form ketopantoate.</text>
</comment>
<comment type="catalytic activity">
    <reaction evidence="1">
        <text>3-methyl-2-oxobutanoate + (6R)-5,10-methylene-5,6,7,8-tetrahydrofolate + H2O = 2-dehydropantoate + (6S)-5,6,7,8-tetrahydrofolate</text>
        <dbReference type="Rhea" id="RHEA:11824"/>
        <dbReference type="ChEBI" id="CHEBI:11561"/>
        <dbReference type="ChEBI" id="CHEBI:11851"/>
        <dbReference type="ChEBI" id="CHEBI:15377"/>
        <dbReference type="ChEBI" id="CHEBI:15636"/>
        <dbReference type="ChEBI" id="CHEBI:57453"/>
        <dbReference type="EC" id="2.1.2.11"/>
    </reaction>
</comment>
<comment type="cofactor">
    <cofactor evidence="1">
        <name>Mg(2+)</name>
        <dbReference type="ChEBI" id="CHEBI:18420"/>
    </cofactor>
    <text evidence="1">Binds 1 Mg(2+) ion per subunit.</text>
</comment>
<comment type="pathway">
    <text evidence="1">Cofactor biosynthesis; (R)-pantothenate biosynthesis; (R)-pantoate from 3-methyl-2-oxobutanoate: step 1/2.</text>
</comment>
<comment type="subunit">
    <text evidence="1">Homodecamer; pentamer of dimers.</text>
</comment>
<comment type="subcellular location">
    <subcellularLocation>
        <location evidence="1">Cytoplasm</location>
    </subcellularLocation>
</comment>
<comment type="similarity">
    <text evidence="1">Belongs to the PanB family.</text>
</comment>
<protein>
    <recommendedName>
        <fullName evidence="1">3-methyl-2-oxobutanoate hydroxymethyltransferase</fullName>
        <ecNumber evidence="1">2.1.2.11</ecNumber>
    </recommendedName>
    <alternativeName>
        <fullName evidence="1">Ketopantoate hydroxymethyltransferase</fullName>
        <shortName evidence="1">KPHMT</shortName>
    </alternativeName>
</protein>
<dbReference type="EC" id="2.1.2.11" evidence="1"/>
<dbReference type="EMBL" id="CP001600">
    <property type="protein sequence ID" value="ACR68007.1"/>
    <property type="molecule type" value="Genomic_DNA"/>
</dbReference>
<dbReference type="RefSeq" id="WP_015870200.1">
    <property type="nucleotide sequence ID" value="NZ_CP169062.1"/>
</dbReference>
<dbReference type="SMR" id="C5B9K6"/>
<dbReference type="STRING" id="67780.B6E78_14550"/>
<dbReference type="GeneID" id="69537844"/>
<dbReference type="KEGG" id="eic:NT01EI_0786"/>
<dbReference type="PATRIC" id="fig|634503.3.peg.712"/>
<dbReference type="HOGENOM" id="CLU_036645_1_0_6"/>
<dbReference type="UniPathway" id="UPA00028">
    <property type="reaction ID" value="UER00003"/>
</dbReference>
<dbReference type="Proteomes" id="UP000001485">
    <property type="component" value="Chromosome"/>
</dbReference>
<dbReference type="GO" id="GO:0005737">
    <property type="term" value="C:cytoplasm"/>
    <property type="evidence" value="ECO:0007669"/>
    <property type="project" value="UniProtKB-SubCell"/>
</dbReference>
<dbReference type="GO" id="GO:0003864">
    <property type="term" value="F:3-methyl-2-oxobutanoate hydroxymethyltransferase activity"/>
    <property type="evidence" value="ECO:0007669"/>
    <property type="project" value="UniProtKB-UniRule"/>
</dbReference>
<dbReference type="GO" id="GO:0000287">
    <property type="term" value="F:magnesium ion binding"/>
    <property type="evidence" value="ECO:0007669"/>
    <property type="project" value="TreeGrafter"/>
</dbReference>
<dbReference type="GO" id="GO:0015940">
    <property type="term" value="P:pantothenate biosynthetic process"/>
    <property type="evidence" value="ECO:0007669"/>
    <property type="project" value="UniProtKB-UniRule"/>
</dbReference>
<dbReference type="CDD" id="cd06557">
    <property type="entry name" value="KPHMT-like"/>
    <property type="match status" value="1"/>
</dbReference>
<dbReference type="FunFam" id="3.20.20.60:FF:000003">
    <property type="entry name" value="3-methyl-2-oxobutanoate hydroxymethyltransferase"/>
    <property type="match status" value="1"/>
</dbReference>
<dbReference type="Gene3D" id="3.20.20.60">
    <property type="entry name" value="Phosphoenolpyruvate-binding domains"/>
    <property type="match status" value="1"/>
</dbReference>
<dbReference type="HAMAP" id="MF_00156">
    <property type="entry name" value="PanB"/>
    <property type="match status" value="1"/>
</dbReference>
<dbReference type="InterPro" id="IPR003700">
    <property type="entry name" value="Pantoate_hydroxy_MeTrfase"/>
</dbReference>
<dbReference type="InterPro" id="IPR015813">
    <property type="entry name" value="Pyrv/PenolPyrv_kinase-like_dom"/>
</dbReference>
<dbReference type="InterPro" id="IPR040442">
    <property type="entry name" value="Pyrv_kinase-like_dom_sf"/>
</dbReference>
<dbReference type="NCBIfam" id="TIGR00222">
    <property type="entry name" value="panB"/>
    <property type="match status" value="1"/>
</dbReference>
<dbReference type="NCBIfam" id="NF001452">
    <property type="entry name" value="PRK00311.1"/>
    <property type="match status" value="1"/>
</dbReference>
<dbReference type="PANTHER" id="PTHR20881">
    <property type="entry name" value="3-METHYL-2-OXOBUTANOATE HYDROXYMETHYLTRANSFERASE"/>
    <property type="match status" value="1"/>
</dbReference>
<dbReference type="PANTHER" id="PTHR20881:SF0">
    <property type="entry name" value="3-METHYL-2-OXOBUTANOATE HYDROXYMETHYLTRANSFERASE"/>
    <property type="match status" value="1"/>
</dbReference>
<dbReference type="Pfam" id="PF02548">
    <property type="entry name" value="Pantoate_transf"/>
    <property type="match status" value="1"/>
</dbReference>
<dbReference type="PIRSF" id="PIRSF000388">
    <property type="entry name" value="Pantoate_hydroxy_MeTrfase"/>
    <property type="match status" value="1"/>
</dbReference>
<dbReference type="SUPFAM" id="SSF51621">
    <property type="entry name" value="Phosphoenolpyruvate/pyruvate domain"/>
    <property type="match status" value="1"/>
</dbReference>
<accession>C5B9K6</accession>
<evidence type="ECO:0000255" key="1">
    <source>
        <dbReference type="HAMAP-Rule" id="MF_00156"/>
    </source>
</evidence>
<sequence>MTPTTLSHLRKRKQEKHKFATITAYDASFARLFAEQGIDVMLVGDSLGMTLQGHDTTLSVTVADIAYHTRAVRAGAPACLLMADMPFMSYATPELACTNAAELMRAGANLVKMEGGAWLCDSVRMLTERAVPVCGHLGLMPQSVNIFGGYRVQGRDQDAADQLLSDALALEGAGAQMLVLECVPAQVAKTISEALRIPVIGIGAGRDTDGQILVMHDALGISSGHMPSFVKNFLAAEGDIRAAVRRYINDVEQGLFPADEHTFN</sequence>